<keyword id="KW-0479">Metal-binding</keyword>
<keyword id="KW-0677">Repeat</keyword>
<keyword id="KW-0804">Transcription</keyword>
<keyword id="KW-0805">Transcription regulation</keyword>
<keyword id="KW-0862">Zinc</keyword>
<keyword id="KW-0863">Zinc-finger</keyword>
<evidence type="ECO:0000255" key="1">
    <source>
        <dbReference type="HAMAP-Rule" id="MF_00383"/>
    </source>
</evidence>
<evidence type="ECO:0000255" key="2">
    <source>
        <dbReference type="PROSITE-ProRule" id="PRU00469"/>
    </source>
</evidence>
<organism>
    <name type="scientific">Thermoplasma volcanium (strain ATCC 51530 / DSM 4299 / JCM 9571 / NBRC 15438 / GSS1)</name>
    <dbReference type="NCBI Taxonomy" id="273116"/>
    <lineage>
        <taxon>Archaea</taxon>
        <taxon>Methanobacteriati</taxon>
        <taxon>Thermoplasmatota</taxon>
        <taxon>Thermoplasmata</taxon>
        <taxon>Thermoplasmatales</taxon>
        <taxon>Thermoplasmataceae</taxon>
        <taxon>Thermoplasma</taxon>
    </lineage>
</organism>
<name>TF2B2_THEVO</name>
<comment type="function">
    <text evidence="1">Stabilizes TBP binding to an archaeal box-A promoter. Also responsible for recruiting RNA polymerase II to the pre-initiation complex (DNA-TBP-TFIIB).</text>
</comment>
<comment type="similarity">
    <text evidence="1">Belongs to the TFIIB family.</text>
</comment>
<reference key="1">
    <citation type="journal article" date="2000" name="Proc. Natl. Acad. Sci. U.S.A.">
        <title>Archaeal adaptation to higher temperatures revealed by genomic sequence of Thermoplasma volcanium.</title>
        <authorList>
            <person name="Kawashima T."/>
            <person name="Amano N."/>
            <person name="Koike H."/>
            <person name="Makino S."/>
            <person name="Higuchi S."/>
            <person name="Kawashima-Ohya Y."/>
            <person name="Watanabe K."/>
            <person name="Yamazaki M."/>
            <person name="Kanehori K."/>
            <person name="Kawamoto T."/>
            <person name="Nunoshiba T."/>
            <person name="Yamamoto Y."/>
            <person name="Aramaki H."/>
            <person name="Makino K."/>
            <person name="Suzuki M."/>
        </authorList>
    </citation>
    <scope>NUCLEOTIDE SEQUENCE [LARGE SCALE GENOMIC DNA]</scope>
    <source>
        <strain>ATCC 51530 / DSM 4299 / JCM 9571 / NBRC 15438 / GSS1</strain>
    </source>
</reference>
<protein>
    <recommendedName>
        <fullName evidence="1">Transcription initiation factor IIB 2</fullName>
        <shortName evidence="1">TFIIB 2</shortName>
    </recommendedName>
</protein>
<dbReference type="EMBL" id="BA000011">
    <property type="protein sequence ID" value="BAB60255.1"/>
    <property type="molecule type" value="Genomic_DNA"/>
</dbReference>
<dbReference type="RefSeq" id="WP_010917347.1">
    <property type="nucleotide sequence ID" value="NC_002689.2"/>
</dbReference>
<dbReference type="SMR" id="Q979P7"/>
<dbReference type="STRING" id="273116.gene:9381912"/>
<dbReference type="PaxDb" id="273116-14325351"/>
<dbReference type="GeneID" id="1441229"/>
<dbReference type="KEGG" id="tvo:TVG1144753"/>
<dbReference type="eggNOG" id="arCOG01981">
    <property type="taxonomic scope" value="Archaea"/>
</dbReference>
<dbReference type="HOGENOM" id="CLU_043736_0_1_2"/>
<dbReference type="PhylomeDB" id="Q979P7"/>
<dbReference type="Proteomes" id="UP000001017">
    <property type="component" value="Chromosome"/>
</dbReference>
<dbReference type="GO" id="GO:0097550">
    <property type="term" value="C:transcription preinitiation complex"/>
    <property type="evidence" value="ECO:0007669"/>
    <property type="project" value="TreeGrafter"/>
</dbReference>
<dbReference type="GO" id="GO:0003700">
    <property type="term" value="F:DNA-binding transcription factor activity"/>
    <property type="evidence" value="ECO:0007669"/>
    <property type="project" value="UniProtKB-UniRule"/>
</dbReference>
<dbReference type="GO" id="GO:0017025">
    <property type="term" value="F:TBP-class protein binding"/>
    <property type="evidence" value="ECO:0007669"/>
    <property type="project" value="InterPro"/>
</dbReference>
<dbReference type="GO" id="GO:0008270">
    <property type="term" value="F:zinc ion binding"/>
    <property type="evidence" value="ECO:0007669"/>
    <property type="project" value="UniProtKB-UniRule"/>
</dbReference>
<dbReference type="GO" id="GO:0070897">
    <property type="term" value="P:transcription preinitiation complex assembly"/>
    <property type="evidence" value="ECO:0007669"/>
    <property type="project" value="InterPro"/>
</dbReference>
<dbReference type="CDD" id="cd20549">
    <property type="entry name" value="CYCLIN_TFIIB_archaea_like_rpt1"/>
    <property type="match status" value="1"/>
</dbReference>
<dbReference type="CDD" id="cd20550">
    <property type="entry name" value="CYCLIN_TFIIB_archaea_like_rpt2"/>
    <property type="match status" value="1"/>
</dbReference>
<dbReference type="FunFam" id="1.10.472.10:FF:000023">
    <property type="entry name" value="Transcription initiation factor IIB"/>
    <property type="match status" value="1"/>
</dbReference>
<dbReference type="FunFam" id="1.10.472.170:FF:000001">
    <property type="entry name" value="Transcription initiation factor IIB"/>
    <property type="match status" value="1"/>
</dbReference>
<dbReference type="Gene3D" id="1.10.472.170">
    <property type="match status" value="1"/>
</dbReference>
<dbReference type="Gene3D" id="1.10.472.10">
    <property type="entry name" value="Cyclin-like"/>
    <property type="match status" value="1"/>
</dbReference>
<dbReference type="HAMAP" id="MF_00383">
    <property type="entry name" value="TF2B_arch"/>
    <property type="match status" value="1"/>
</dbReference>
<dbReference type="InterPro" id="IPR013763">
    <property type="entry name" value="Cyclin-like_dom"/>
</dbReference>
<dbReference type="InterPro" id="IPR036915">
    <property type="entry name" value="Cyclin-like_sf"/>
</dbReference>
<dbReference type="InterPro" id="IPR000812">
    <property type="entry name" value="TFIIB"/>
</dbReference>
<dbReference type="InterPro" id="IPR023484">
    <property type="entry name" value="TFIIB_arc"/>
</dbReference>
<dbReference type="InterPro" id="IPR023486">
    <property type="entry name" value="TFIIB_CS"/>
</dbReference>
<dbReference type="InterPro" id="IPR013150">
    <property type="entry name" value="TFIIB_cyclin"/>
</dbReference>
<dbReference type="InterPro" id="IPR013137">
    <property type="entry name" value="Znf_TFIIB"/>
</dbReference>
<dbReference type="NCBIfam" id="NF001658">
    <property type="entry name" value="PRK00423.1"/>
    <property type="match status" value="1"/>
</dbReference>
<dbReference type="PANTHER" id="PTHR11618:SF13">
    <property type="entry name" value="TRANSCRIPTION INITIATION FACTOR IIB"/>
    <property type="match status" value="1"/>
</dbReference>
<dbReference type="PANTHER" id="PTHR11618">
    <property type="entry name" value="TRANSCRIPTION INITIATION FACTOR IIB-RELATED"/>
    <property type="match status" value="1"/>
</dbReference>
<dbReference type="Pfam" id="PF00382">
    <property type="entry name" value="TFIIB"/>
    <property type="match status" value="2"/>
</dbReference>
<dbReference type="Pfam" id="PF08271">
    <property type="entry name" value="Zn_Ribbon_TF"/>
    <property type="match status" value="1"/>
</dbReference>
<dbReference type="PRINTS" id="PR00685">
    <property type="entry name" value="TIFACTORIIB"/>
</dbReference>
<dbReference type="SMART" id="SM00385">
    <property type="entry name" value="CYCLIN"/>
    <property type="match status" value="2"/>
</dbReference>
<dbReference type="SUPFAM" id="SSF47954">
    <property type="entry name" value="Cyclin-like"/>
    <property type="match status" value="2"/>
</dbReference>
<dbReference type="SUPFAM" id="SSF57783">
    <property type="entry name" value="Zinc beta-ribbon"/>
    <property type="match status" value="1"/>
</dbReference>
<dbReference type="PROSITE" id="PS00782">
    <property type="entry name" value="TFIIB"/>
    <property type="match status" value="1"/>
</dbReference>
<dbReference type="PROSITE" id="PS51134">
    <property type="entry name" value="ZF_TFIIB"/>
    <property type="match status" value="1"/>
</dbReference>
<gene>
    <name evidence="1" type="primary">tfbB</name>
    <name type="ordered locus">TV1113</name>
    <name type="ORF">TVG1144753</name>
</gene>
<proteinExistence type="inferred from homology"/>
<accession>Q979P7</accession>
<feature type="chain" id="PRO_0000119341" description="Transcription initiation factor IIB 2">
    <location>
        <begin position="1"/>
        <end position="313"/>
    </location>
</feature>
<feature type="repeat" description="1">
    <location>
        <begin position="130"/>
        <end position="213"/>
    </location>
</feature>
<feature type="repeat" description="2">
    <location>
        <begin position="224"/>
        <end position="305"/>
    </location>
</feature>
<feature type="zinc finger region" description="TFIIB-type" evidence="2">
    <location>
        <begin position="13"/>
        <end position="44"/>
    </location>
</feature>
<feature type="binding site" evidence="2">
    <location>
        <position position="17"/>
    </location>
    <ligand>
        <name>Zn(2+)</name>
        <dbReference type="ChEBI" id="CHEBI:29105"/>
    </ligand>
</feature>
<feature type="binding site" evidence="2">
    <location>
        <position position="20"/>
    </location>
    <ligand>
        <name>Zn(2+)</name>
        <dbReference type="ChEBI" id="CHEBI:29105"/>
    </ligand>
</feature>
<feature type="binding site" evidence="2">
    <location>
        <position position="36"/>
    </location>
    <ligand>
        <name>Zn(2+)</name>
        <dbReference type="ChEBI" id="CHEBI:29105"/>
    </ligand>
</feature>
<feature type="binding site" evidence="2">
    <location>
        <position position="39"/>
    </location>
    <ligand>
        <name>Zn(2+)</name>
        <dbReference type="ChEBI" id="CHEBI:29105"/>
    </ligand>
</feature>
<sequence>MPYSDKMAIESEAPKRCPECHSEHLIRDYEHGELICADCGAVIEDSFIDQGPEWRAFDSDQDERRARTGSPMTYLSHDKGLATEISWSNKDYYGKRIPHKNRAQIYRVRKWHQRIRVSNAAERNLSLALQLLNDIGAKLGIPKDIKETSALIYRKAVEKNLIRGRSIESIVCASIYAACRKVNIPRTLDEIAKASEVNKKKIGKAYRHLAKELDLNLRPTTPFSYIAQFCNKLDLDKQAIVISEDIVRQAMSMGISSGKGPTGIAAAAIYIASVKVGKPRTQKEIARISGVTEVTIRNRYKEISKALNISISE</sequence>